<keyword id="KW-1003">Cell membrane</keyword>
<keyword id="KW-0297">G-protein coupled receptor</keyword>
<keyword id="KW-0325">Glycoprotein</keyword>
<keyword id="KW-0449">Lipoprotein</keyword>
<keyword id="KW-0472">Membrane</keyword>
<keyword id="KW-0564">Palmitate</keyword>
<keyword id="KW-0675">Receptor</keyword>
<keyword id="KW-1185">Reference proteome</keyword>
<keyword id="KW-0807">Transducer</keyword>
<keyword id="KW-0812">Transmembrane</keyword>
<keyword id="KW-1133">Transmembrane helix</keyword>
<accession>P25100</accession>
<accession>Q9NPY0</accession>
<reference key="1">
    <citation type="journal article" date="1991" name="Biochem. Biophys. Res. Commun.">
        <title>Molecular cloning and sequencing of a cDNA encoding a human alpha 1A adrenergic receptor.</title>
        <authorList>
            <person name="Bruno J.F."/>
            <person name="Whittaker J."/>
            <person name="Song J."/>
            <person name="Berelowitz M."/>
        </authorList>
    </citation>
    <scope>NUCLEOTIDE SEQUENCE [MRNA]</scope>
    <source>
        <tissue>Hippocampus</tissue>
    </source>
</reference>
<reference key="2">
    <citation type="journal article" date="1994" name="Mol. Pharmacol.">
        <title>The alpha 1-adrenergic receptor that mediates smooth muscle contraction in human prostate has the pharmacological properties of the cloned human alpha 1c subtype.</title>
        <authorList>
            <person name="Forray C."/>
            <person name="Bard J.A."/>
            <person name="Wetzel J.M."/>
            <person name="Chiu G."/>
            <person name="Shapiro E."/>
            <person name="Tang R."/>
            <person name="Lepor H."/>
            <person name="Hartig P.R."/>
            <person name="Weinshank R.L."/>
            <person name="Branchek T.A."/>
            <person name="Gluchowski C."/>
        </authorList>
    </citation>
    <scope>NUCLEOTIDE SEQUENCE [MRNA]</scope>
    <source>
        <tissue>Hippocampus</tissue>
    </source>
</reference>
<reference key="3">
    <citation type="journal article" date="1995" name="J. Pharmacol. Exp. Ther.">
        <title>Cloning and pharmacological characterization of human alpha-1 adrenergic receptors: sequence corrections and direct comparison with other species homologues.</title>
        <authorList>
            <person name="Schwinn D.A."/>
            <person name="Johnston G.I."/>
            <person name="Page S.O."/>
            <person name="Mosley M.J."/>
            <person name="Wilson K.H."/>
            <person name="Worman N.P."/>
            <person name="Campbell S."/>
            <person name="Fidock M.D."/>
            <person name="Furness L.M."/>
            <person name="Parry-Smith D.J."/>
            <person name="Peter B."/>
            <person name="Bailey D.S."/>
        </authorList>
    </citation>
    <scope>NUCLEOTIDE SEQUENCE [MRNA]</scope>
</reference>
<reference key="4">
    <citation type="journal article" date="1994" name="Biochem. Biophys. Res. Commun.">
        <title>Cloning, expression and characterization of human alpha adrenergic receptors alpha 1a, alpha 1b and alpha 1c.</title>
        <authorList>
            <person name="Weinberg D.H."/>
            <person name="Trivedi P."/>
            <person name="Tan C.P."/>
            <person name="Mitra S."/>
            <person name="Perkins-Barrow A."/>
            <person name="Borkowski D."/>
            <person name="Strader C.D."/>
            <person name="Bayne M."/>
        </authorList>
    </citation>
    <scope>NUCLEOTIDE SEQUENCE [MRNA]</scope>
</reference>
<reference key="5">
    <citation type="journal article" date="1995" name="Mol. Pharmacol.">
        <title>Cloning of the human alpha 1d-adrenergic receptor and inducible expression of three human subtypes in SK-N-MC cells.</title>
        <authorList>
            <person name="Esbenshade T.A."/>
            <person name="Hirasawa A."/>
            <person name="Tsujimoto G."/>
            <person name="Tanaka T."/>
            <person name="Yano J."/>
            <person name="Minneman K.P."/>
            <person name="Murphy T.J."/>
        </authorList>
    </citation>
    <scope>NUCLEOTIDE SEQUENCE [GENOMIC DNA]</scope>
    <source>
        <tissue>Placenta</tissue>
        <tissue>Prostate</tissue>
    </source>
</reference>
<reference key="6">
    <citation type="journal article" date="2001" name="Nature">
        <title>The DNA sequence and comparative analysis of human chromosome 20.</title>
        <authorList>
            <person name="Deloukas P."/>
            <person name="Matthews L.H."/>
            <person name="Ashurst J.L."/>
            <person name="Burton J."/>
            <person name="Gilbert J.G.R."/>
            <person name="Jones M."/>
            <person name="Stavrides G."/>
            <person name="Almeida J.P."/>
            <person name="Babbage A.K."/>
            <person name="Bagguley C.L."/>
            <person name="Bailey J."/>
            <person name="Barlow K.F."/>
            <person name="Bates K.N."/>
            <person name="Beard L.M."/>
            <person name="Beare D.M."/>
            <person name="Beasley O.P."/>
            <person name="Bird C.P."/>
            <person name="Blakey S.E."/>
            <person name="Bridgeman A.M."/>
            <person name="Brown A.J."/>
            <person name="Buck D."/>
            <person name="Burrill W.D."/>
            <person name="Butler A.P."/>
            <person name="Carder C."/>
            <person name="Carter N.P."/>
            <person name="Chapman J.C."/>
            <person name="Clamp M."/>
            <person name="Clark G."/>
            <person name="Clark L.N."/>
            <person name="Clark S.Y."/>
            <person name="Clee C.M."/>
            <person name="Clegg S."/>
            <person name="Cobley V.E."/>
            <person name="Collier R.E."/>
            <person name="Connor R.E."/>
            <person name="Corby N.R."/>
            <person name="Coulson A."/>
            <person name="Coville G.J."/>
            <person name="Deadman R."/>
            <person name="Dhami P.D."/>
            <person name="Dunn M."/>
            <person name="Ellington A.G."/>
            <person name="Frankland J.A."/>
            <person name="Fraser A."/>
            <person name="French L."/>
            <person name="Garner P."/>
            <person name="Grafham D.V."/>
            <person name="Griffiths C."/>
            <person name="Griffiths M.N.D."/>
            <person name="Gwilliam R."/>
            <person name="Hall R.E."/>
            <person name="Hammond S."/>
            <person name="Harley J.L."/>
            <person name="Heath P.D."/>
            <person name="Ho S."/>
            <person name="Holden J.L."/>
            <person name="Howden P.J."/>
            <person name="Huckle E."/>
            <person name="Hunt A.R."/>
            <person name="Hunt S.E."/>
            <person name="Jekosch K."/>
            <person name="Johnson C.M."/>
            <person name="Johnson D."/>
            <person name="Kay M.P."/>
            <person name="Kimberley A.M."/>
            <person name="King A."/>
            <person name="Knights A."/>
            <person name="Laird G.K."/>
            <person name="Lawlor S."/>
            <person name="Lehvaeslaiho M.H."/>
            <person name="Leversha M.A."/>
            <person name="Lloyd C."/>
            <person name="Lloyd D.M."/>
            <person name="Lovell J.D."/>
            <person name="Marsh V.L."/>
            <person name="Martin S.L."/>
            <person name="McConnachie L.J."/>
            <person name="McLay K."/>
            <person name="McMurray A.A."/>
            <person name="Milne S.A."/>
            <person name="Mistry D."/>
            <person name="Moore M.J.F."/>
            <person name="Mullikin J.C."/>
            <person name="Nickerson T."/>
            <person name="Oliver K."/>
            <person name="Parker A."/>
            <person name="Patel R."/>
            <person name="Pearce T.A.V."/>
            <person name="Peck A.I."/>
            <person name="Phillimore B.J.C.T."/>
            <person name="Prathalingam S.R."/>
            <person name="Plumb R.W."/>
            <person name="Ramsay H."/>
            <person name="Rice C.M."/>
            <person name="Ross M.T."/>
            <person name="Scott C.E."/>
            <person name="Sehra H.K."/>
            <person name="Shownkeen R."/>
            <person name="Sims S."/>
            <person name="Skuce C.D."/>
            <person name="Smith M.L."/>
            <person name="Soderlund C."/>
            <person name="Steward C.A."/>
            <person name="Sulston J.E."/>
            <person name="Swann R.M."/>
            <person name="Sycamore N."/>
            <person name="Taylor R."/>
            <person name="Tee L."/>
            <person name="Thomas D.W."/>
            <person name="Thorpe A."/>
            <person name="Tracey A."/>
            <person name="Tromans A.C."/>
            <person name="Vaudin M."/>
            <person name="Wall M."/>
            <person name="Wallis J.M."/>
            <person name="Whitehead S.L."/>
            <person name="Whittaker P."/>
            <person name="Willey D.L."/>
            <person name="Williams L."/>
            <person name="Williams S.A."/>
            <person name="Wilming L."/>
            <person name="Wray P.W."/>
            <person name="Hubbard T."/>
            <person name="Durbin R.M."/>
            <person name="Bentley D.R."/>
            <person name="Beck S."/>
            <person name="Rogers J."/>
        </authorList>
    </citation>
    <scope>NUCLEOTIDE SEQUENCE [LARGE SCALE GENOMIC DNA]</scope>
</reference>
<reference key="7">
    <citation type="journal article" date="2015" name="Biochemistry">
        <title>G Protein-Coupled Receptors Directly Bind Filamin A with High Affinity and Promote Filamin Phosphorylation.</title>
        <authorList>
            <person name="Tirupula K.C."/>
            <person name="Ithychanda S.S."/>
            <person name="Mohan M.L."/>
            <person name="Naga Prasad S.V."/>
            <person name="Qin J."/>
            <person name="Karnik S.S."/>
        </authorList>
    </citation>
    <scope>INTERACTION WITH FLNA</scope>
</reference>
<protein>
    <recommendedName>
        <fullName>Alpha-1D adrenergic receptor</fullName>
    </recommendedName>
    <alternativeName>
        <fullName>Alpha-1A adrenergic receptor</fullName>
    </alternativeName>
    <alternativeName>
        <fullName>Alpha-1D adrenoreceptor</fullName>
        <shortName>Alpha-1D adrenoceptor</shortName>
    </alternativeName>
    <alternativeName>
        <fullName>Alpha-adrenergic receptor 1a</fullName>
    </alternativeName>
</protein>
<dbReference type="EMBL" id="M76446">
    <property type="protein sequence ID" value="AAA35496.1"/>
    <property type="molecule type" value="mRNA"/>
</dbReference>
<dbReference type="EMBL" id="U03864">
    <property type="protein sequence ID" value="AAB60351.1"/>
    <property type="molecule type" value="mRNA"/>
</dbReference>
<dbReference type="EMBL" id="L31772">
    <property type="protein sequence ID" value="AAB59487.1"/>
    <property type="molecule type" value="mRNA"/>
</dbReference>
<dbReference type="EMBL" id="S70782">
    <property type="protein sequence ID" value="AAB31163.2"/>
    <property type="molecule type" value="mRNA"/>
</dbReference>
<dbReference type="EMBL" id="D29952">
    <property type="protein sequence ID" value="BAA06222.1"/>
    <property type="molecule type" value="Genomic_DNA"/>
</dbReference>
<dbReference type="EMBL" id="AL121675">
    <property type="status" value="NOT_ANNOTATED_CDS"/>
    <property type="molecule type" value="Genomic_DNA"/>
</dbReference>
<dbReference type="EMBL" id="AL357040">
    <property type="status" value="NOT_ANNOTATED_CDS"/>
    <property type="molecule type" value="Genomic_DNA"/>
</dbReference>
<dbReference type="CCDS" id="CCDS13079.1"/>
<dbReference type="PIR" id="I39369">
    <property type="entry name" value="I39369"/>
</dbReference>
<dbReference type="PIR" id="JH0447">
    <property type="entry name" value="JH0447"/>
</dbReference>
<dbReference type="RefSeq" id="NP_000669.1">
    <property type="nucleotide sequence ID" value="NM_000678.4"/>
</dbReference>
<dbReference type="SMR" id="P25100"/>
<dbReference type="BioGRID" id="106656">
    <property type="interactions" value="16"/>
</dbReference>
<dbReference type="CORUM" id="P25100"/>
<dbReference type="FunCoup" id="P25100">
    <property type="interactions" value="1279"/>
</dbReference>
<dbReference type="IntAct" id="P25100">
    <property type="interactions" value="29"/>
</dbReference>
<dbReference type="MINT" id="P25100"/>
<dbReference type="STRING" id="9606.ENSP00000368766"/>
<dbReference type="BindingDB" id="P25100"/>
<dbReference type="ChEMBL" id="CHEMBL223"/>
<dbReference type="DrugBank" id="DB01472">
    <property type="generic name" value="4-Methoxyamphetamine"/>
</dbReference>
<dbReference type="DrugBank" id="DB00346">
    <property type="generic name" value="Alfuzosin"/>
</dbReference>
<dbReference type="DrugBank" id="DB00321">
    <property type="generic name" value="Amitriptyline"/>
</dbReference>
<dbReference type="DrugBank" id="DB00543">
    <property type="generic name" value="Amoxapine"/>
</dbReference>
<dbReference type="DrugBank" id="DB00182">
    <property type="generic name" value="Amphetamine"/>
</dbReference>
<dbReference type="DrugBank" id="DB09229">
    <property type="generic name" value="Aranidipine"/>
</dbReference>
<dbReference type="DrugBank" id="DB06413">
    <property type="generic name" value="Armodafinil"/>
</dbReference>
<dbReference type="DrugBank" id="DB09204">
    <property type="generic name" value="Arotinolol"/>
</dbReference>
<dbReference type="DrugBank" id="DB09128">
    <property type="generic name" value="Brexpiprazole"/>
</dbReference>
<dbReference type="DrugBank" id="DB01200">
    <property type="generic name" value="Bromocriptine"/>
</dbReference>
<dbReference type="DrugBank" id="DB12230">
    <property type="generic name" value="Bunazosin"/>
</dbReference>
<dbReference type="DrugBank" id="DB00490">
    <property type="generic name" value="Buspirone"/>
</dbReference>
<dbReference type="DrugBank" id="DB00248">
    <property type="generic name" value="Cabergoline"/>
</dbReference>
<dbReference type="DrugBank" id="DB01136">
    <property type="generic name" value="Carvedilol"/>
</dbReference>
<dbReference type="DrugBank" id="DB00477">
    <property type="generic name" value="Chlorpromazine"/>
</dbReference>
<dbReference type="DrugBank" id="DB09202">
    <property type="generic name" value="Cirazoline"/>
</dbReference>
<dbReference type="DrugBank" id="DB00575">
    <property type="generic name" value="Clonidine"/>
</dbReference>
<dbReference type="DrugBank" id="DB15971">
    <property type="generic name" value="Clorotepine"/>
</dbReference>
<dbReference type="DrugBank" id="DB00298">
    <property type="generic name" value="Dapiprazole"/>
</dbReference>
<dbReference type="DrugBank" id="DB01151">
    <property type="generic name" value="Desipramine"/>
</dbReference>
<dbReference type="DrugBank" id="DB01576">
    <property type="generic name" value="Dextroamphetamine"/>
</dbReference>
<dbReference type="DrugBank" id="DB11273">
    <property type="generic name" value="Dihydroergocornine"/>
</dbReference>
<dbReference type="DrugBank" id="DB13345">
    <property type="generic name" value="Dihydroergocristine"/>
</dbReference>
<dbReference type="DrugBank" id="DB00320">
    <property type="generic name" value="Dihydroergotamine"/>
</dbReference>
<dbReference type="DrugBank" id="DB11278">
    <property type="generic name" value="DL-Methylephedrine"/>
</dbReference>
<dbReference type="DrugBank" id="DB00841">
    <property type="generic name" value="Dobutamine"/>
</dbReference>
<dbReference type="DrugBank" id="DB09167">
    <property type="generic name" value="Dosulepin"/>
</dbReference>
<dbReference type="DrugBank" id="DB00590">
    <property type="generic name" value="Doxazosin"/>
</dbReference>
<dbReference type="DrugBank" id="DB01142">
    <property type="generic name" value="Doxepin"/>
</dbReference>
<dbReference type="DrugBank" id="DB04855">
    <property type="generic name" value="Dronedarone"/>
</dbReference>
<dbReference type="DrugBank" id="DB06262">
    <property type="generic name" value="Droxidopa"/>
</dbReference>
<dbReference type="DrugBank" id="DB05492">
    <property type="generic name" value="Epicept NP-1"/>
</dbReference>
<dbReference type="DrugBank" id="DB00668">
    <property type="generic name" value="Epinephrine"/>
</dbReference>
<dbReference type="DrugBank" id="DB01049">
    <property type="generic name" value="Ergoloid mesylate"/>
</dbReference>
<dbReference type="DrugBank" id="DB00696">
    <property type="generic name" value="Ergotamine"/>
</dbReference>
<dbReference type="DrugBank" id="DB01175">
    <property type="generic name" value="Escitalopram"/>
</dbReference>
<dbReference type="DrugBank" id="DB09194">
    <property type="generic name" value="Etoperidone"/>
</dbReference>
<dbReference type="DrugBank" id="DB00800">
    <property type="generic name" value="Fenoldopam"/>
</dbReference>
<dbReference type="DrugBank" id="DB13665">
    <property type="generic name" value="Fluanisone"/>
</dbReference>
<dbReference type="DrugBank" id="DB00458">
    <property type="generic name" value="Imipramine"/>
</dbReference>
<dbReference type="DrugBank" id="DB11577">
    <property type="generic name" value="Indigotindisulfonic acid"/>
</dbReference>
<dbReference type="DrugBank" id="DB08950">
    <property type="generic name" value="Indoramin"/>
</dbReference>
<dbReference type="DrugBank" id="DB00598">
    <property type="generic name" value="Labetalol"/>
</dbReference>
<dbReference type="DrugBank" id="DB06707">
    <property type="generic name" value="Levonordefrin"/>
</dbReference>
<dbReference type="DrugBank" id="DB09195">
    <property type="generic name" value="Lorpiprazole"/>
</dbReference>
<dbReference type="DrugBank" id="DB00934">
    <property type="generic name" value="Maprotiline"/>
</dbReference>
<dbReference type="DrugBank" id="DB11428">
    <property type="generic name" value="Medetomidine"/>
</dbReference>
<dbReference type="DrugBank" id="DB01365">
    <property type="generic name" value="Mephentermine"/>
</dbReference>
<dbReference type="DrugBank" id="DB01403">
    <property type="generic name" value="Methotrimeprazine"/>
</dbReference>
<dbReference type="DrugBank" id="DB00723">
    <property type="generic name" value="Methoxamine"/>
</dbReference>
<dbReference type="DrugBank" id="DB06148">
    <property type="generic name" value="Mianserin"/>
</dbReference>
<dbReference type="DrugBank" id="DB00211">
    <property type="generic name" value="Midodrine"/>
</dbReference>
<dbReference type="DrugBank" id="DB00370">
    <property type="generic name" value="Mirtazapine"/>
</dbReference>
<dbReference type="DrugBank" id="DB09205">
    <property type="generic name" value="Moxisylyte"/>
</dbReference>
<dbReference type="DrugBank" id="DB00622">
    <property type="generic name" value="Nicardipine"/>
</dbReference>
<dbReference type="DrugBank" id="DB00368">
    <property type="generic name" value="Norepinephrine"/>
</dbReference>
<dbReference type="DrugBank" id="DB00540">
    <property type="generic name" value="Nortriptyline"/>
</dbReference>
<dbReference type="DrugBank" id="DB06229">
    <property type="generic name" value="Ocaperidone"/>
</dbReference>
<dbReference type="DrugBank" id="DB00935">
    <property type="generic name" value="Oxymetazoline"/>
</dbReference>
<dbReference type="DrugBank" id="DB00715">
    <property type="generic name" value="Paroxetine"/>
</dbReference>
<dbReference type="DrugBank" id="DB01186">
    <property type="generic name" value="Pergolide"/>
</dbReference>
<dbReference type="DrugBank" id="DB08922">
    <property type="generic name" value="Perospirone"/>
</dbReference>
<dbReference type="DrugBank" id="DB00925">
    <property type="generic name" value="Phenoxybenzamine"/>
</dbReference>
<dbReference type="DrugBank" id="DB00692">
    <property type="generic name" value="Phentolamine"/>
</dbReference>
<dbReference type="DrugBank" id="DB00388">
    <property type="generic name" value="Phenylephrine"/>
</dbReference>
<dbReference type="DrugBank" id="DB09286">
    <property type="generic name" value="Pipamperone"/>
</dbReference>
<dbReference type="DrugBank" id="DB06153">
    <property type="generic name" value="Pizotifen"/>
</dbReference>
<dbReference type="DrugBank" id="DB00457">
    <property type="generic name" value="Prazosin"/>
</dbReference>
<dbReference type="DrugBank" id="DB00433">
    <property type="generic name" value="Prochlorperazine"/>
</dbReference>
<dbReference type="DrugBank" id="DB01069">
    <property type="generic name" value="Promethazine"/>
</dbReference>
<dbReference type="DrugBank" id="DB01224">
    <property type="generic name" value="Quetiapine"/>
</dbReference>
<dbReference type="DrugBank" id="DB00908">
    <property type="generic name" value="Quinidine"/>
</dbReference>
<dbReference type="DrugBank" id="DB05469">
    <property type="generic name" value="R450"/>
</dbReference>
<dbReference type="DrugBank" id="DB11124">
    <property type="generic name" value="Racepinephrine"/>
</dbReference>
<dbReference type="DrugBank" id="DB00243">
    <property type="generic name" value="Ranolazine"/>
</dbReference>
<dbReference type="DrugBank" id="DB00268">
    <property type="generic name" value="Ropinirole"/>
</dbReference>
<dbReference type="DrugBank" id="DB06144">
    <property type="generic name" value="Sertindole"/>
</dbReference>
<dbReference type="DrugBank" id="DB06207">
    <property type="generic name" value="Silodosin"/>
</dbReference>
<dbReference type="DrugBank" id="DB06555">
    <property type="generic name" value="Siramesine"/>
</dbReference>
<dbReference type="DrugBank" id="DB09203">
    <property type="generic name" value="Synephrine"/>
</dbReference>
<dbReference type="DrugBank" id="DB00706">
    <property type="generic name" value="Tamsulosin"/>
</dbReference>
<dbReference type="DrugBank" id="DB01162">
    <property type="generic name" value="Terazosin"/>
</dbReference>
<dbReference type="DrugBank" id="DB06764">
    <property type="generic name" value="Tetryzoline"/>
</dbReference>
<dbReference type="DrugBank" id="DB13025">
    <property type="generic name" value="Tiapride"/>
</dbReference>
<dbReference type="DrugBank" id="DB00697">
    <property type="generic name" value="Tizanidine"/>
</dbReference>
<dbReference type="DrugBank" id="DB09206">
    <property type="generic name" value="Trimazosin"/>
</dbReference>
<dbReference type="DrugBank" id="DB00661">
    <property type="generic name" value="Verapamil"/>
</dbReference>
<dbReference type="DrugBank" id="DB06694">
    <property type="generic name" value="Xylometazoline"/>
</dbReference>
<dbReference type="DrugCentral" id="P25100"/>
<dbReference type="GuidetoPHARMACOLOGY" id="24"/>
<dbReference type="GlyCosmos" id="P25100">
    <property type="glycosylation" value="2 sites, No reported glycans"/>
</dbReference>
<dbReference type="GlyGen" id="P25100">
    <property type="glycosylation" value="2 sites"/>
</dbReference>
<dbReference type="iPTMnet" id="P25100"/>
<dbReference type="PhosphoSitePlus" id="P25100"/>
<dbReference type="BioMuta" id="ADRA1D"/>
<dbReference type="DMDM" id="1168243"/>
<dbReference type="MassIVE" id="P25100"/>
<dbReference type="PaxDb" id="9606-ENSP00000368766"/>
<dbReference type="PeptideAtlas" id="P25100"/>
<dbReference type="ProteomicsDB" id="54255"/>
<dbReference type="Antibodypedia" id="7918">
    <property type="antibodies" value="160 antibodies from 32 providers"/>
</dbReference>
<dbReference type="DNASU" id="146"/>
<dbReference type="Ensembl" id="ENST00000379453.6">
    <property type="protein sequence ID" value="ENSP00000368766.4"/>
    <property type="gene ID" value="ENSG00000171873.8"/>
</dbReference>
<dbReference type="GeneID" id="146"/>
<dbReference type="KEGG" id="hsa:146"/>
<dbReference type="MANE-Select" id="ENST00000379453.6">
    <property type="protein sequence ID" value="ENSP00000368766.4"/>
    <property type="RefSeq nucleotide sequence ID" value="NM_000678.4"/>
    <property type="RefSeq protein sequence ID" value="NP_000669.1"/>
</dbReference>
<dbReference type="UCSC" id="uc002wkr.3">
    <property type="organism name" value="human"/>
</dbReference>
<dbReference type="AGR" id="HGNC:280"/>
<dbReference type="CTD" id="146"/>
<dbReference type="DisGeNET" id="146"/>
<dbReference type="GeneCards" id="ADRA1D"/>
<dbReference type="HGNC" id="HGNC:280">
    <property type="gene designation" value="ADRA1D"/>
</dbReference>
<dbReference type="HPA" id="ENSG00000171873">
    <property type="expression patterns" value="Tissue enhanced (brain, cervix)"/>
</dbReference>
<dbReference type="MIM" id="104219">
    <property type="type" value="gene"/>
</dbReference>
<dbReference type="neXtProt" id="NX_P25100"/>
<dbReference type="OpenTargets" id="ENSG00000171873"/>
<dbReference type="PharmGKB" id="PA24597"/>
<dbReference type="VEuPathDB" id="HostDB:ENSG00000171873"/>
<dbReference type="eggNOG" id="KOG3656">
    <property type="taxonomic scope" value="Eukaryota"/>
</dbReference>
<dbReference type="GeneTree" id="ENSGT00940000160795"/>
<dbReference type="HOGENOM" id="CLU_009579_11_6_1"/>
<dbReference type="InParanoid" id="P25100"/>
<dbReference type="OMA" id="ATCQAYE"/>
<dbReference type="OrthoDB" id="5977853at2759"/>
<dbReference type="PAN-GO" id="P25100">
    <property type="GO annotations" value="9 GO annotations based on evolutionary models"/>
</dbReference>
<dbReference type="PhylomeDB" id="P25100"/>
<dbReference type="TreeFam" id="TF331895"/>
<dbReference type="PathwayCommons" id="P25100"/>
<dbReference type="Reactome" id="R-HSA-390696">
    <property type="pathway name" value="Adrenoceptors"/>
</dbReference>
<dbReference type="Reactome" id="R-HSA-416476">
    <property type="pathway name" value="G alpha (q) signalling events"/>
</dbReference>
<dbReference type="Reactome" id="R-HSA-416482">
    <property type="pathway name" value="G alpha (12/13) signalling events"/>
</dbReference>
<dbReference type="SignaLink" id="P25100"/>
<dbReference type="SIGNOR" id="P25100"/>
<dbReference type="BioGRID-ORCS" id="146">
    <property type="hits" value="11 hits in 1157 CRISPR screens"/>
</dbReference>
<dbReference type="ChiTaRS" id="ADRA1D">
    <property type="organism name" value="human"/>
</dbReference>
<dbReference type="GeneWiki" id="Alpha-1D_adrenergic_receptor"/>
<dbReference type="GenomeRNAi" id="146"/>
<dbReference type="Pharos" id="P25100">
    <property type="development level" value="Tclin"/>
</dbReference>
<dbReference type="PRO" id="PR:P25100"/>
<dbReference type="Proteomes" id="UP000005640">
    <property type="component" value="Chromosome 20"/>
</dbReference>
<dbReference type="RNAct" id="P25100">
    <property type="molecule type" value="protein"/>
</dbReference>
<dbReference type="Bgee" id="ENSG00000171873">
    <property type="expression patterns" value="Expressed in male germ line stem cell (sensu Vertebrata) in testis and 114 other cell types or tissues"/>
</dbReference>
<dbReference type="ExpressionAtlas" id="P25100">
    <property type="expression patterns" value="baseline and differential"/>
</dbReference>
<dbReference type="GO" id="GO:0005886">
    <property type="term" value="C:plasma membrane"/>
    <property type="evidence" value="ECO:0000318"/>
    <property type="project" value="GO_Central"/>
</dbReference>
<dbReference type="GO" id="GO:0004937">
    <property type="term" value="F:alpha1-adrenergic receptor activity"/>
    <property type="evidence" value="ECO:0000318"/>
    <property type="project" value="GO_Central"/>
</dbReference>
<dbReference type="GO" id="GO:0042802">
    <property type="term" value="F:identical protein binding"/>
    <property type="evidence" value="ECO:0000353"/>
    <property type="project" value="IntAct"/>
</dbReference>
<dbReference type="GO" id="GO:0071880">
    <property type="term" value="P:adenylate cyclase-activating adrenergic receptor signaling pathway"/>
    <property type="evidence" value="ECO:0000318"/>
    <property type="project" value="GO_Central"/>
</dbReference>
<dbReference type="GO" id="GO:0007188">
    <property type="term" value="P:adenylate cyclase-modulating G protein-coupled receptor signaling pathway"/>
    <property type="evidence" value="ECO:0000304"/>
    <property type="project" value="ProtInc"/>
</dbReference>
<dbReference type="GO" id="GO:0007267">
    <property type="term" value="P:cell-cell signaling"/>
    <property type="evidence" value="ECO:0000318"/>
    <property type="project" value="GO_Central"/>
</dbReference>
<dbReference type="GO" id="GO:0007186">
    <property type="term" value="P:G protein-coupled receptor signaling pathway"/>
    <property type="evidence" value="ECO:0000304"/>
    <property type="project" value="ProtInc"/>
</dbReference>
<dbReference type="GO" id="GO:0150099">
    <property type="term" value="P:neuron-glial cell signaling"/>
    <property type="evidence" value="ECO:0000250"/>
    <property type="project" value="ARUK-UCL"/>
</dbReference>
<dbReference type="GO" id="GO:0007200">
    <property type="term" value="P:phospholipase C-activating G protein-coupled receptor signaling pathway"/>
    <property type="evidence" value="ECO:0000318"/>
    <property type="project" value="GO_Central"/>
</dbReference>
<dbReference type="GO" id="GO:0008284">
    <property type="term" value="P:positive regulation of cell population proliferation"/>
    <property type="evidence" value="ECO:0000304"/>
    <property type="project" value="ProtInc"/>
</dbReference>
<dbReference type="GO" id="GO:0007204">
    <property type="term" value="P:positive regulation of cytosolic calcium ion concentration"/>
    <property type="evidence" value="ECO:0000318"/>
    <property type="project" value="GO_Central"/>
</dbReference>
<dbReference type="GO" id="GO:0043410">
    <property type="term" value="P:positive regulation of MAPK cascade"/>
    <property type="evidence" value="ECO:0000318"/>
    <property type="project" value="GO_Central"/>
</dbReference>
<dbReference type="GO" id="GO:0045907">
    <property type="term" value="P:positive regulation of vasoconstriction"/>
    <property type="evidence" value="ECO:0000318"/>
    <property type="project" value="GO_Central"/>
</dbReference>
<dbReference type="CDD" id="cd15327">
    <property type="entry name" value="7tmA_alpha1D_AR"/>
    <property type="match status" value="1"/>
</dbReference>
<dbReference type="FunFam" id="1.20.1070.10:FF:000208">
    <property type="entry name" value="Alpha-1D adrenergic receptor"/>
    <property type="match status" value="1"/>
</dbReference>
<dbReference type="Gene3D" id="1.20.1070.10">
    <property type="entry name" value="Rhodopsin 7-helix transmembrane proteins"/>
    <property type="match status" value="1"/>
</dbReference>
<dbReference type="InterPro" id="IPR002233">
    <property type="entry name" value="ADR_fam"/>
</dbReference>
<dbReference type="InterPro" id="IPR000363">
    <property type="entry name" value="ADRA1D_rcpt"/>
</dbReference>
<dbReference type="InterPro" id="IPR000276">
    <property type="entry name" value="GPCR_Rhodpsn"/>
</dbReference>
<dbReference type="InterPro" id="IPR017452">
    <property type="entry name" value="GPCR_Rhodpsn_7TM"/>
</dbReference>
<dbReference type="PANTHER" id="PTHR24248">
    <property type="entry name" value="ADRENERGIC RECEPTOR-RELATED G-PROTEIN COUPLED RECEPTOR"/>
    <property type="match status" value="1"/>
</dbReference>
<dbReference type="PANTHER" id="PTHR24248:SF14">
    <property type="entry name" value="ALPHA-1D ADRENERGIC RECEPTOR"/>
    <property type="match status" value="1"/>
</dbReference>
<dbReference type="Pfam" id="PF00001">
    <property type="entry name" value="7tm_1"/>
    <property type="match status" value="1"/>
</dbReference>
<dbReference type="PRINTS" id="PR01103">
    <property type="entry name" value="ADRENERGICR"/>
</dbReference>
<dbReference type="PRINTS" id="PR00240">
    <property type="entry name" value="ADRENRGCA1DR"/>
</dbReference>
<dbReference type="PRINTS" id="PR00237">
    <property type="entry name" value="GPCRRHODOPSN"/>
</dbReference>
<dbReference type="SMART" id="SM01381">
    <property type="entry name" value="7TM_GPCR_Srsx"/>
    <property type="match status" value="1"/>
</dbReference>
<dbReference type="SUPFAM" id="SSF81321">
    <property type="entry name" value="Family A G protein-coupled receptor-like"/>
    <property type="match status" value="1"/>
</dbReference>
<dbReference type="PROSITE" id="PS00237">
    <property type="entry name" value="G_PROTEIN_RECEP_F1_1"/>
    <property type="match status" value="1"/>
</dbReference>
<dbReference type="PROSITE" id="PS50262">
    <property type="entry name" value="G_PROTEIN_RECEP_F1_2"/>
    <property type="match status" value="1"/>
</dbReference>
<feature type="chain" id="PRO_0000069073" description="Alpha-1D adrenergic receptor">
    <location>
        <begin position="1"/>
        <end position="572"/>
    </location>
</feature>
<feature type="topological domain" description="Extracellular" evidence="1">
    <location>
        <begin position="1"/>
        <end position="95"/>
    </location>
</feature>
<feature type="transmembrane region" description="Helical; Name=1" evidence="1">
    <location>
        <begin position="96"/>
        <end position="121"/>
    </location>
</feature>
<feature type="topological domain" description="Cytoplasmic" evidence="1">
    <location>
        <begin position="122"/>
        <end position="133"/>
    </location>
</feature>
<feature type="transmembrane region" description="Helical; Name=2" evidence="1">
    <location>
        <begin position="134"/>
        <end position="159"/>
    </location>
</feature>
<feature type="topological domain" description="Extracellular" evidence="1">
    <location>
        <begin position="160"/>
        <end position="169"/>
    </location>
</feature>
<feature type="transmembrane region" description="Helical; Name=3" evidence="1">
    <location>
        <begin position="170"/>
        <end position="192"/>
    </location>
</feature>
<feature type="topological domain" description="Cytoplasmic" evidence="1">
    <location>
        <begin position="193"/>
        <end position="213"/>
    </location>
</feature>
<feature type="transmembrane region" description="Helical; Name=4" evidence="1">
    <location>
        <begin position="214"/>
        <end position="238"/>
    </location>
</feature>
<feature type="topological domain" description="Extracellular" evidence="1">
    <location>
        <begin position="239"/>
        <end position="251"/>
    </location>
</feature>
<feature type="transmembrane region" description="Helical; Name=5" evidence="1">
    <location>
        <begin position="252"/>
        <end position="275"/>
    </location>
</feature>
<feature type="topological domain" description="Cytoplasmic" evidence="1">
    <location>
        <begin position="276"/>
        <end position="348"/>
    </location>
</feature>
<feature type="transmembrane region" description="Helical; Name=6" evidence="1">
    <location>
        <begin position="349"/>
        <end position="373"/>
    </location>
</feature>
<feature type="topological domain" description="Extracellular" evidence="1">
    <location>
        <begin position="374"/>
        <end position="380"/>
    </location>
</feature>
<feature type="transmembrane region" description="Helical; Name=7" evidence="1">
    <location>
        <begin position="381"/>
        <end position="405"/>
    </location>
</feature>
<feature type="topological domain" description="Cytoplasmic" evidence="1">
    <location>
        <begin position="406"/>
        <end position="572"/>
    </location>
</feature>
<feature type="region of interest" description="Disordered" evidence="5">
    <location>
        <begin position="1"/>
        <end position="77"/>
    </location>
</feature>
<feature type="region of interest" description="Disordered" evidence="5">
    <location>
        <begin position="444"/>
        <end position="488"/>
    </location>
</feature>
<feature type="compositionally biased region" description="Gly residues" evidence="5">
    <location>
        <begin position="23"/>
        <end position="33"/>
    </location>
</feature>
<feature type="compositionally biased region" description="Gly residues" evidence="5">
    <location>
        <begin position="42"/>
        <end position="61"/>
    </location>
</feature>
<feature type="compositionally biased region" description="Low complexity" evidence="5">
    <location>
        <begin position="450"/>
        <end position="468"/>
    </location>
</feature>
<feature type="lipid moiety-binding region" description="S-palmitoyl cysteine" evidence="3">
    <location>
        <position position="419"/>
    </location>
</feature>
<feature type="glycosylation site" description="N-linked (GlcNAc...) asparagine" evidence="3">
    <location>
        <position position="65"/>
    </location>
</feature>
<feature type="glycosylation site" description="N-linked (GlcNAc...) asparagine" evidence="3">
    <location>
        <position position="82"/>
    </location>
</feature>
<feature type="sequence conflict" description="In Ref. 1." evidence="7" ref="1">
    <original>MTFRDLLSVSFEGPRPDSSAGGSSAGGGGGSAGGAAPSEGPAVGGVPGGAGGGGGVVGAGSGEDNRSSAGEPGSAGAGGDVNG</original>
    <variation>MAAALRSVMMAGYLSEWRTPTYRSTEMVQRLRMEAVQHSTS</variation>
    <location>
        <begin position="1"/>
        <end position="83"/>
    </location>
</feature>
<feature type="sequence conflict" description="In Ref. 4; AAB31163." evidence="7" ref="4">
    <original>S</original>
    <variation>G</variation>
    <location>
        <position position="31"/>
    </location>
</feature>
<feature type="sequence conflict" description="In Ref. 1." evidence="7" ref="1">
    <original>KPPSAFREWRLLGPFRRPTTQLRAKVSSLSHKIRAGGAQRAEAACAQRSEVEAVSLGVPHEVAEGATCQAYELADYSNLRETDI</original>
    <variation>SHPAPSASGGCWGRSGDPRPSCAPKSPACRTRSPPGARSAQRQRAPSAQRWRLCP</variation>
    <location>
        <begin position="489"/>
        <end position="572"/>
    </location>
</feature>
<feature type="sequence conflict" description="In Ref. 4; AAB31163." evidence="7" ref="4">
    <original>R</original>
    <variation>P</variation>
    <location>
        <position position="522"/>
    </location>
</feature>
<organism>
    <name type="scientific">Homo sapiens</name>
    <name type="common">Human</name>
    <dbReference type="NCBI Taxonomy" id="9606"/>
    <lineage>
        <taxon>Eukaryota</taxon>
        <taxon>Metazoa</taxon>
        <taxon>Chordata</taxon>
        <taxon>Craniata</taxon>
        <taxon>Vertebrata</taxon>
        <taxon>Euteleostomi</taxon>
        <taxon>Mammalia</taxon>
        <taxon>Eutheria</taxon>
        <taxon>Euarchontoglires</taxon>
        <taxon>Primates</taxon>
        <taxon>Haplorrhini</taxon>
        <taxon>Catarrhini</taxon>
        <taxon>Hominidae</taxon>
        <taxon>Homo</taxon>
    </lineage>
</organism>
<sequence>MTFRDLLSVSFEGPRPDSSAGGSSAGGGGGSAGGAAPSEGPAVGGVPGGAGGGGGVVGAGSGEDNRSSAGEPGSAGAGGDVNGTAAVGGLVVSAQGVGVGVFLAAFILMAVAGNLLVILSVACNRHLQTVTNYFIVNLAVADLLLSATVLPFSATMEVLGFWAFGRAFCDVWAAVDVLCCTASILSLCTISVDRYVGVRHSLKYPAIMTERKAAAILALLWVVALVVSVGPLLGWKEPVPPDERFCGITEEAGYAVFSSVCSFYLPMAVIVVMYCRVYVVARSTTRSLEAGVKRERGKASEVVLRIHCRGAATGADGAHGMRSAKGHTFRSSLSVRLLKFSREKKAAKTLAIVVGVFVLCWFPFFFVLPLGSLFPQLKPSEGVFKVIFWLGYFNSCVNPLIYPCSSREFKRAFLRLLRCQCRRRRRRRPLWRVYGHHWRASTSGLRQDCAPSSGDAPPGAPLALTALPDPDPEPPGTPEMQAPVASRRKPPSAFREWRLLGPFRRPTTQLRAKVSSLSHKIRAGGAQRAEAACAQRSEVEAVSLGVPHEVAEGATCQAYELADYSNLRETDI</sequence>
<comment type="function">
    <text>This alpha-adrenergic receptor mediates its effect through the influx of extracellular calcium.</text>
</comment>
<comment type="subunit">
    <text evidence="6">Interacts with FLNA (via filamin repeat 21); increases PKA-mediated phosphorylation of FLNA.</text>
</comment>
<comment type="interaction">
    <interactant intactId="EBI-489993">
        <id>P25100</id>
    </interactant>
    <interactant intactId="EBI-489993">
        <id>P25100</id>
        <label>ADRA1D</label>
    </interactant>
    <organismsDiffer>false</organismsDiffer>
    <experiments>5</experiments>
</comment>
<comment type="interaction">
    <interactant intactId="EBI-489993">
        <id>P25100</id>
    </interactant>
    <interactant intactId="EBI-357345">
        <id>Q14160</id>
        <label>SCRIB</label>
    </interactant>
    <organismsDiffer>false</organismsDiffer>
    <experiments>19</experiments>
</comment>
<comment type="interaction">
    <interactant intactId="EBI-489993">
        <id>P25100</id>
    </interactant>
    <interactant intactId="EBI-717191">
        <id>Q13424</id>
        <label>SNTA1</label>
    </interactant>
    <organismsDiffer>false</organismsDiffer>
    <experiments>11</experiments>
</comment>
<comment type="interaction">
    <interactant intactId="EBI-489993">
        <id>P25100</id>
    </interactant>
    <interactant intactId="EBI-80411">
        <id>Q13425</id>
        <label>SNTB2</label>
    </interactant>
    <organismsDiffer>false</organismsDiffer>
    <experiments>16</experiments>
</comment>
<comment type="interaction">
    <interactant intactId="EBI-489993">
        <id>P25100</id>
    </interactant>
    <interactant intactId="EBI-295952">
        <id>Q61234</id>
        <label>Snta1</label>
    </interactant>
    <organismsDiffer>true</organismsDiffer>
    <experiments>3</experiments>
</comment>
<comment type="interaction">
    <interactant intactId="EBI-489993">
        <id>P25100</id>
    </interactant>
    <interactant intactId="EBI-295943">
        <id>Q99L88</id>
        <label>Sntb1</label>
    </interactant>
    <organismsDiffer>true</organismsDiffer>
    <experiments>2</experiments>
</comment>
<comment type="interaction">
    <interactant intactId="EBI-489993">
        <id>P25100</id>
    </interactant>
    <interactant intactId="EBI-8521556">
        <id>Q925E0</id>
        <label>Sntg2</label>
    </interactant>
    <organismsDiffer>true</organismsDiffer>
    <experiments>2</experiments>
</comment>
<comment type="subcellular location">
    <subcellularLocation>
        <location>Cell membrane</location>
        <topology>Multi-pass membrane protein</topology>
    </subcellularLocation>
</comment>
<comment type="PTM">
    <text evidence="2">Palmitoylated. Palmitoylation by ZDHHC21 may increase the expression of the receptor and regulate downstream signaling.</text>
</comment>
<comment type="similarity">
    <text evidence="4">Belongs to the G-protein coupled receptor 1 family. Adrenergic receptor subfamily. ADRA1D sub-subfamily.</text>
</comment>
<evidence type="ECO:0000250" key="1"/>
<evidence type="ECO:0000250" key="2">
    <source>
        <dbReference type="UniProtKB" id="P97714"/>
    </source>
</evidence>
<evidence type="ECO:0000255" key="3"/>
<evidence type="ECO:0000255" key="4">
    <source>
        <dbReference type="PROSITE-ProRule" id="PRU00521"/>
    </source>
</evidence>
<evidence type="ECO:0000256" key="5">
    <source>
        <dbReference type="SAM" id="MobiDB-lite"/>
    </source>
</evidence>
<evidence type="ECO:0000269" key="6">
    <source>
    </source>
</evidence>
<evidence type="ECO:0000305" key="7"/>
<proteinExistence type="evidence at protein level"/>
<gene>
    <name type="primary">ADRA1D</name>
    <name type="synonym">ADRA1A</name>
</gene>
<name>ADA1D_HUMAN</name>